<protein>
    <recommendedName>
        <fullName evidence="1">Phosphoenolpyruvate guanylyltransferase</fullName>
        <shortName evidence="1">PEP guanylyltransferase</shortName>
        <ecNumber evidence="1">2.7.7.105</ecNumber>
    </recommendedName>
</protein>
<dbReference type="EC" id="2.7.7.105" evidence="1"/>
<dbReference type="EMBL" id="AP008957">
    <property type="protein sequence ID" value="BAH33121.1"/>
    <property type="molecule type" value="Genomic_DNA"/>
</dbReference>
<dbReference type="SMR" id="C0ZXN6"/>
<dbReference type="KEGG" id="rer:RER_24130"/>
<dbReference type="PATRIC" id="fig|234621.6.peg.2919"/>
<dbReference type="eggNOG" id="COG1920">
    <property type="taxonomic scope" value="Bacteria"/>
</dbReference>
<dbReference type="HOGENOM" id="CLU_076569_0_0_11"/>
<dbReference type="UniPathway" id="UPA00071"/>
<dbReference type="Proteomes" id="UP000002204">
    <property type="component" value="Chromosome"/>
</dbReference>
<dbReference type="GO" id="GO:0005525">
    <property type="term" value="F:GTP binding"/>
    <property type="evidence" value="ECO:0007669"/>
    <property type="project" value="UniProtKB-KW"/>
</dbReference>
<dbReference type="GO" id="GO:0043814">
    <property type="term" value="F:phospholactate guanylyltransferase activity"/>
    <property type="evidence" value="ECO:0007669"/>
    <property type="project" value="InterPro"/>
</dbReference>
<dbReference type="GO" id="GO:0052645">
    <property type="term" value="P:F420-0 metabolic process"/>
    <property type="evidence" value="ECO:0007669"/>
    <property type="project" value="UniProtKB-UniRule"/>
</dbReference>
<dbReference type="Gene3D" id="3.90.550.10">
    <property type="entry name" value="Spore Coat Polysaccharide Biosynthesis Protein SpsA, Chain A"/>
    <property type="match status" value="1"/>
</dbReference>
<dbReference type="HAMAP" id="MF_02114">
    <property type="entry name" value="CofC"/>
    <property type="match status" value="1"/>
</dbReference>
<dbReference type="InterPro" id="IPR002835">
    <property type="entry name" value="CofC"/>
</dbReference>
<dbReference type="InterPro" id="IPR029044">
    <property type="entry name" value="Nucleotide-diphossugar_trans"/>
</dbReference>
<dbReference type="NCBIfam" id="TIGR03552">
    <property type="entry name" value="F420_cofC"/>
    <property type="match status" value="1"/>
</dbReference>
<dbReference type="PANTHER" id="PTHR40392">
    <property type="entry name" value="2-PHOSPHO-L-LACTATE GUANYLYLTRANSFERASE"/>
    <property type="match status" value="1"/>
</dbReference>
<dbReference type="PANTHER" id="PTHR40392:SF1">
    <property type="entry name" value="2-PHOSPHO-L-LACTATE GUANYLYLTRANSFERASE"/>
    <property type="match status" value="1"/>
</dbReference>
<dbReference type="Pfam" id="PF01983">
    <property type="entry name" value="CofC"/>
    <property type="match status" value="1"/>
</dbReference>
<dbReference type="SUPFAM" id="SSF53448">
    <property type="entry name" value="Nucleotide-diphospho-sugar transferases"/>
    <property type="match status" value="1"/>
</dbReference>
<evidence type="ECO:0000255" key="1">
    <source>
        <dbReference type="HAMAP-Rule" id="MF_02114"/>
    </source>
</evidence>
<evidence type="ECO:0000256" key="2">
    <source>
        <dbReference type="SAM" id="MobiDB-lite"/>
    </source>
</evidence>
<sequence length="225" mass="22905">MHAIVAVKSLRSAKSRLAGELDADARADLVLAMLHDTLATVAAVSAIDTVTVVTPDPTVAALAYSVGVTVYADPAPHISLTNGASPRAEETLNAALSAAAADIRAKRGVVDLVVLQADLPAMQPSELTEAVAAARSGGRSVVVDHHGTGTSALFACGESALDPRFGPESARGHANSGARPLNGQWPGLRTDVDTHADLDTVRALGVGPATLASLTRLKATPSNSR</sequence>
<name>FBID_RHOE4</name>
<reference key="1">
    <citation type="submission" date="2005-03" db="EMBL/GenBank/DDBJ databases">
        <title>Comparison of the complete genome sequences of Rhodococcus erythropolis PR4 and Rhodococcus opacus B4.</title>
        <authorList>
            <person name="Takarada H."/>
            <person name="Sekine M."/>
            <person name="Hosoyama A."/>
            <person name="Yamada R."/>
            <person name="Fujisawa T."/>
            <person name="Omata S."/>
            <person name="Shimizu A."/>
            <person name="Tsukatani N."/>
            <person name="Tanikawa S."/>
            <person name="Fujita N."/>
            <person name="Harayama S."/>
        </authorList>
    </citation>
    <scope>NUCLEOTIDE SEQUENCE [LARGE SCALE GENOMIC DNA]</scope>
    <source>
        <strain>PR4 / NBRC 100887</strain>
    </source>
</reference>
<proteinExistence type="inferred from homology"/>
<feature type="chain" id="PRO_0000398705" description="Phosphoenolpyruvate guanylyltransferase">
    <location>
        <begin position="1"/>
        <end position="225"/>
    </location>
</feature>
<feature type="region of interest" description="Disordered" evidence="2">
    <location>
        <begin position="167"/>
        <end position="186"/>
    </location>
</feature>
<feature type="binding site" evidence="1">
    <location>
        <position position="150"/>
    </location>
    <ligand>
        <name>phosphoenolpyruvate</name>
        <dbReference type="ChEBI" id="CHEBI:58702"/>
    </ligand>
</feature>
<feature type="binding site" evidence="1">
    <location>
        <position position="166"/>
    </location>
    <ligand>
        <name>phosphoenolpyruvate</name>
        <dbReference type="ChEBI" id="CHEBI:58702"/>
    </ligand>
</feature>
<feature type="binding site" evidence="1">
    <location>
        <position position="169"/>
    </location>
    <ligand>
        <name>phosphoenolpyruvate</name>
        <dbReference type="ChEBI" id="CHEBI:58702"/>
    </ligand>
</feature>
<organism>
    <name type="scientific">Rhodococcus erythropolis (strain PR4 / NBRC 100887)</name>
    <dbReference type="NCBI Taxonomy" id="234621"/>
    <lineage>
        <taxon>Bacteria</taxon>
        <taxon>Bacillati</taxon>
        <taxon>Actinomycetota</taxon>
        <taxon>Actinomycetes</taxon>
        <taxon>Mycobacteriales</taxon>
        <taxon>Nocardiaceae</taxon>
        <taxon>Rhodococcus</taxon>
        <taxon>Rhodococcus erythropolis group</taxon>
    </lineage>
</organism>
<gene>
    <name evidence="1" type="primary">fbiD</name>
    <name type="ordered locus">RER_24130</name>
</gene>
<accession>C0ZXN6</accession>
<keyword id="KW-0342">GTP-binding</keyword>
<keyword id="KW-0547">Nucleotide-binding</keyword>
<keyword id="KW-0548">Nucleotidyltransferase</keyword>
<keyword id="KW-0808">Transferase</keyword>
<comment type="function">
    <text evidence="1">Guanylyltransferase that catalyzes the activation of phosphoenolpyruvate (PEP) as enolpyruvoyl-2-diphospho-5'-guanosine, via the condensation of PEP with GTP. It is involved in the biosynthesis of coenzyme F420, a hydride carrier cofactor.</text>
</comment>
<comment type="catalytic activity">
    <reaction evidence="1">
        <text>phosphoenolpyruvate + GTP + H(+) = enolpyruvoyl-2-diphospho-5'-guanosine + diphosphate</text>
        <dbReference type="Rhea" id="RHEA:30519"/>
        <dbReference type="ChEBI" id="CHEBI:15378"/>
        <dbReference type="ChEBI" id="CHEBI:33019"/>
        <dbReference type="ChEBI" id="CHEBI:37565"/>
        <dbReference type="ChEBI" id="CHEBI:58702"/>
        <dbReference type="ChEBI" id="CHEBI:143701"/>
        <dbReference type="EC" id="2.7.7.105"/>
    </reaction>
</comment>
<comment type="pathway">
    <text evidence="1">Cofactor biosynthesis; coenzyme F420 biosynthesis.</text>
</comment>
<comment type="similarity">
    <text evidence="1">Belongs to the CofC family.</text>
</comment>